<name>AROD_STAAE</name>
<accession>A6QFB2</accession>
<reference key="1">
    <citation type="journal article" date="2008" name="J. Bacteriol.">
        <title>Genome sequence of Staphylococcus aureus strain Newman and comparative analysis of staphylococcal genomes: polymorphism and evolution of two major pathogenicity islands.</title>
        <authorList>
            <person name="Baba T."/>
            <person name="Bae T."/>
            <person name="Schneewind O."/>
            <person name="Takeuchi F."/>
            <person name="Hiramatsu K."/>
        </authorList>
    </citation>
    <scope>NUCLEOTIDE SEQUENCE [LARGE SCALE GENOMIC DNA]</scope>
    <source>
        <strain>Newman</strain>
    </source>
</reference>
<keyword id="KW-0028">Amino-acid biosynthesis</keyword>
<keyword id="KW-0057">Aromatic amino acid biosynthesis</keyword>
<keyword id="KW-0456">Lyase</keyword>
<keyword id="KW-0704">Schiff base</keyword>
<protein>
    <recommendedName>
        <fullName evidence="1">3-dehydroquinate dehydratase</fullName>
        <shortName evidence="1">3-dehydroquinase</shortName>
        <ecNumber evidence="1">4.2.1.10</ecNumber>
    </recommendedName>
    <alternativeName>
        <fullName evidence="1">Type I DHQase</fullName>
    </alternativeName>
    <alternativeName>
        <fullName evidence="1">Type I dehydroquinase</fullName>
        <shortName evidence="1">DHQ1</shortName>
    </alternativeName>
</protein>
<comment type="function">
    <text evidence="1">Involved in the third step of the chorismate pathway, which leads to the biosynthesis of aromatic amino acids. Catalyzes the cis-dehydration of 3-dehydroquinate (DHQ) and introduces the first double bond of the aromatic ring to yield 3-dehydroshikimate.</text>
</comment>
<comment type="catalytic activity">
    <reaction evidence="1">
        <text>3-dehydroquinate = 3-dehydroshikimate + H2O</text>
        <dbReference type="Rhea" id="RHEA:21096"/>
        <dbReference type="ChEBI" id="CHEBI:15377"/>
        <dbReference type="ChEBI" id="CHEBI:16630"/>
        <dbReference type="ChEBI" id="CHEBI:32364"/>
        <dbReference type="EC" id="4.2.1.10"/>
    </reaction>
</comment>
<comment type="pathway">
    <text evidence="1">Metabolic intermediate biosynthesis; chorismate biosynthesis; chorismate from D-erythrose 4-phosphate and phosphoenolpyruvate: step 3/7.</text>
</comment>
<comment type="subunit">
    <text evidence="1">Homodimer.</text>
</comment>
<comment type="similarity">
    <text evidence="1">Belongs to the type-I 3-dehydroquinase family.</text>
</comment>
<organism>
    <name type="scientific">Staphylococcus aureus (strain Newman)</name>
    <dbReference type="NCBI Taxonomy" id="426430"/>
    <lineage>
        <taxon>Bacteria</taxon>
        <taxon>Bacillati</taxon>
        <taxon>Bacillota</taxon>
        <taxon>Bacilli</taxon>
        <taxon>Bacillales</taxon>
        <taxon>Staphylococcaceae</taxon>
        <taxon>Staphylococcus</taxon>
    </lineage>
</organism>
<feature type="chain" id="PRO_1000071750" description="3-dehydroquinate dehydratase">
    <location>
        <begin position="1"/>
        <end position="238"/>
    </location>
</feature>
<feature type="active site" description="Proton donor/acceptor" evidence="1">
    <location>
        <position position="133"/>
    </location>
</feature>
<feature type="active site" description="Schiff-base intermediate with substrate" evidence="1">
    <location>
        <position position="160"/>
    </location>
</feature>
<feature type="binding site" evidence="1">
    <location>
        <begin position="35"/>
        <end position="37"/>
    </location>
    <ligand>
        <name>3-dehydroquinate</name>
        <dbReference type="ChEBI" id="CHEBI:32364"/>
    </ligand>
</feature>
<feature type="binding site" evidence="1">
    <location>
        <position position="70"/>
    </location>
    <ligand>
        <name>3-dehydroquinate</name>
        <dbReference type="ChEBI" id="CHEBI:32364"/>
    </ligand>
</feature>
<feature type="binding site" evidence="1">
    <location>
        <position position="202"/>
    </location>
    <ligand>
        <name>3-dehydroquinate</name>
        <dbReference type="ChEBI" id="CHEBI:32364"/>
    </ligand>
</feature>
<feature type="binding site" evidence="1">
    <location>
        <position position="225"/>
    </location>
    <ligand>
        <name>3-dehydroquinate</name>
        <dbReference type="ChEBI" id="CHEBI:32364"/>
    </ligand>
</feature>
<gene>
    <name evidence="1" type="primary">aroD</name>
    <name type="ordered locus">NWMN_0772</name>
</gene>
<dbReference type="EC" id="4.2.1.10" evidence="1"/>
<dbReference type="EMBL" id="AP009351">
    <property type="protein sequence ID" value="BAF67044.1"/>
    <property type="molecule type" value="Genomic_DNA"/>
</dbReference>
<dbReference type="RefSeq" id="WP_000150017.1">
    <property type="nucleotide sequence ID" value="NZ_JBBIAE010000002.1"/>
</dbReference>
<dbReference type="SMR" id="A6QFB2"/>
<dbReference type="KEGG" id="sae:NWMN_0772"/>
<dbReference type="HOGENOM" id="CLU_064444_2_1_9"/>
<dbReference type="UniPathway" id="UPA00053">
    <property type="reaction ID" value="UER00086"/>
</dbReference>
<dbReference type="Proteomes" id="UP000006386">
    <property type="component" value="Chromosome"/>
</dbReference>
<dbReference type="GO" id="GO:0003855">
    <property type="term" value="F:3-dehydroquinate dehydratase activity"/>
    <property type="evidence" value="ECO:0007669"/>
    <property type="project" value="UniProtKB-UniRule"/>
</dbReference>
<dbReference type="GO" id="GO:0046279">
    <property type="term" value="P:3,4-dihydroxybenzoate biosynthetic process"/>
    <property type="evidence" value="ECO:0007669"/>
    <property type="project" value="TreeGrafter"/>
</dbReference>
<dbReference type="GO" id="GO:0008652">
    <property type="term" value="P:amino acid biosynthetic process"/>
    <property type="evidence" value="ECO:0007669"/>
    <property type="project" value="UniProtKB-KW"/>
</dbReference>
<dbReference type="GO" id="GO:0009073">
    <property type="term" value="P:aromatic amino acid family biosynthetic process"/>
    <property type="evidence" value="ECO:0007669"/>
    <property type="project" value="UniProtKB-KW"/>
</dbReference>
<dbReference type="GO" id="GO:0009423">
    <property type="term" value="P:chorismate biosynthetic process"/>
    <property type="evidence" value="ECO:0007669"/>
    <property type="project" value="UniProtKB-UniRule"/>
</dbReference>
<dbReference type="CDD" id="cd00502">
    <property type="entry name" value="DHQase_I"/>
    <property type="match status" value="1"/>
</dbReference>
<dbReference type="FunFam" id="3.20.20.70:FF:000216">
    <property type="entry name" value="3-dehydroquinate dehydratase"/>
    <property type="match status" value="1"/>
</dbReference>
<dbReference type="Gene3D" id="3.20.20.70">
    <property type="entry name" value="Aldolase class I"/>
    <property type="match status" value="1"/>
</dbReference>
<dbReference type="HAMAP" id="MF_00214">
    <property type="entry name" value="AroD"/>
    <property type="match status" value="1"/>
</dbReference>
<dbReference type="InterPro" id="IPR013785">
    <property type="entry name" value="Aldolase_TIM"/>
</dbReference>
<dbReference type="InterPro" id="IPR001381">
    <property type="entry name" value="DHquinase_I"/>
</dbReference>
<dbReference type="InterPro" id="IPR050146">
    <property type="entry name" value="Type-I_3-dehydroquinase"/>
</dbReference>
<dbReference type="NCBIfam" id="TIGR01093">
    <property type="entry name" value="aroD"/>
    <property type="match status" value="1"/>
</dbReference>
<dbReference type="PANTHER" id="PTHR43699">
    <property type="entry name" value="3-DEHYDROQUINATE DEHYDRATASE"/>
    <property type="match status" value="1"/>
</dbReference>
<dbReference type="PANTHER" id="PTHR43699:SF1">
    <property type="entry name" value="3-DEHYDROQUINATE DEHYDRATASE"/>
    <property type="match status" value="1"/>
</dbReference>
<dbReference type="Pfam" id="PF01487">
    <property type="entry name" value="DHquinase_I"/>
    <property type="match status" value="1"/>
</dbReference>
<dbReference type="SUPFAM" id="SSF51569">
    <property type="entry name" value="Aldolase"/>
    <property type="match status" value="1"/>
</dbReference>
<proteinExistence type="inferred from homology"/>
<sequence length="238" mass="26869">MTHVEVVATIAPQLSIEETLIQKINHRIDAIDVLELRIDQIENVTVDQVAEMITKLKVMQDSFKLLVTYRTKLQGGYGQFTNDSYLNLISDLANINGIDMIDIEWQADIDIEKHQRIITHLQQYNKEVVISHHNFESTPPLDELQFIFFKMQKFNPEYVKLAVMPHNKNDVLNLLQAMSTFSDTMDCKVVGISMSKLGLISRTAQGVFGGALTYGCIGVPQAPGQIDVTDLKAQVTLY</sequence>
<evidence type="ECO:0000255" key="1">
    <source>
        <dbReference type="HAMAP-Rule" id="MF_00214"/>
    </source>
</evidence>